<dbReference type="EMBL" id="U31427">
    <property type="protein sequence ID" value="AAC35995.2"/>
    <property type="molecule type" value="mRNA"/>
</dbReference>
<dbReference type="RefSeq" id="NP_001080948.2">
    <property type="nucleotide sequence ID" value="NM_001087479.2"/>
</dbReference>
<dbReference type="SMR" id="O13097"/>
<dbReference type="BioGRID" id="98894">
    <property type="interactions" value="1"/>
</dbReference>
<dbReference type="DIP" id="DIP-60983N"/>
<dbReference type="IntAct" id="O13097">
    <property type="interactions" value="5"/>
</dbReference>
<dbReference type="GlyCosmos" id="O13097">
    <property type="glycosylation" value="2 sites, No reported glycans"/>
</dbReference>
<dbReference type="GeneID" id="394292"/>
<dbReference type="KEGG" id="xla:394292"/>
<dbReference type="AGR" id="Xenbase:XB-GENE-1011784"/>
<dbReference type="CTD" id="394292"/>
<dbReference type="Xenbase" id="XB-GENE-1011784">
    <property type="gene designation" value="efnb1.L"/>
</dbReference>
<dbReference type="OMA" id="QAEFCST"/>
<dbReference type="OrthoDB" id="6250301at2759"/>
<dbReference type="Proteomes" id="UP000186698">
    <property type="component" value="Chromosome 8L"/>
</dbReference>
<dbReference type="Bgee" id="394292">
    <property type="expression patterns" value="Expressed in internal ear and 19 other cell types or tissues"/>
</dbReference>
<dbReference type="GO" id="GO:0098978">
    <property type="term" value="C:glutamatergic synapse"/>
    <property type="evidence" value="ECO:0000318"/>
    <property type="project" value="GO_Central"/>
</dbReference>
<dbReference type="GO" id="GO:0005886">
    <property type="term" value="C:plasma membrane"/>
    <property type="evidence" value="ECO:0000318"/>
    <property type="project" value="GO_Central"/>
</dbReference>
<dbReference type="GO" id="GO:0042734">
    <property type="term" value="C:presynaptic membrane"/>
    <property type="evidence" value="ECO:0000318"/>
    <property type="project" value="GO_Central"/>
</dbReference>
<dbReference type="GO" id="GO:0046875">
    <property type="term" value="F:ephrin receptor binding"/>
    <property type="evidence" value="ECO:0000318"/>
    <property type="project" value="GO_Central"/>
</dbReference>
<dbReference type="GO" id="GO:0007411">
    <property type="term" value="P:axon guidance"/>
    <property type="evidence" value="ECO:0000318"/>
    <property type="project" value="GO_Central"/>
</dbReference>
<dbReference type="GO" id="GO:0048013">
    <property type="term" value="P:ephrin receptor signaling pathway"/>
    <property type="evidence" value="ECO:0000318"/>
    <property type="project" value="GO_Central"/>
</dbReference>
<dbReference type="CDD" id="cd10426">
    <property type="entry name" value="Ephrin-B_Ectodomain"/>
    <property type="match status" value="1"/>
</dbReference>
<dbReference type="FunFam" id="2.60.40.420:FF:000027">
    <property type="entry name" value="ephrin-B1"/>
    <property type="match status" value="1"/>
</dbReference>
<dbReference type="Gene3D" id="2.60.40.420">
    <property type="entry name" value="Cupredoxins - blue copper proteins"/>
    <property type="match status" value="1"/>
</dbReference>
<dbReference type="InterPro" id="IPR008972">
    <property type="entry name" value="Cupredoxin"/>
</dbReference>
<dbReference type="InterPro" id="IPR031328">
    <property type="entry name" value="Ephrin"/>
</dbReference>
<dbReference type="InterPro" id="IPR034255">
    <property type="entry name" value="Ephrin-B_Ecto"/>
</dbReference>
<dbReference type="InterPro" id="IPR019765">
    <property type="entry name" value="Ephrin_CS"/>
</dbReference>
<dbReference type="InterPro" id="IPR001799">
    <property type="entry name" value="Ephrin_RBD"/>
</dbReference>
<dbReference type="PANTHER" id="PTHR11304">
    <property type="entry name" value="EPHRIN"/>
    <property type="match status" value="1"/>
</dbReference>
<dbReference type="PANTHER" id="PTHR11304:SF17">
    <property type="entry name" value="EPHRIN-B1"/>
    <property type="match status" value="1"/>
</dbReference>
<dbReference type="Pfam" id="PF00812">
    <property type="entry name" value="Ephrin"/>
    <property type="match status" value="1"/>
</dbReference>
<dbReference type="PRINTS" id="PR01347">
    <property type="entry name" value="EPHRIN"/>
</dbReference>
<dbReference type="SUPFAM" id="SSF49503">
    <property type="entry name" value="Cupredoxins"/>
    <property type="match status" value="1"/>
</dbReference>
<dbReference type="PROSITE" id="PS01299">
    <property type="entry name" value="EPHRIN_RBD_1"/>
    <property type="match status" value="1"/>
</dbReference>
<dbReference type="PROSITE" id="PS51551">
    <property type="entry name" value="EPHRIN_RBD_2"/>
    <property type="match status" value="1"/>
</dbReference>
<protein>
    <recommendedName>
        <fullName>Ephrin-B1</fullName>
    </recommendedName>
    <alternativeName>
        <fullName>ELK ligand</fullName>
        <shortName>ELK-L</shortName>
    </alternativeName>
    <alternativeName>
        <fullName>EPH-related receptor tyrosine kinase ligand 2</fullName>
        <shortName>LERK-2</shortName>
    </alternativeName>
    <alternativeName>
        <fullName>XlERK</fullName>
    </alternativeName>
</protein>
<keyword id="KW-0217">Developmental protein</keyword>
<keyword id="KW-0221">Differentiation</keyword>
<keyword id="KW-1015">Disulfide bond</keyword>
<keyword id="KW-0325">Glycoprotein</keyword>
<keyword id="KW-0472">Membrane</keyword>
<keyword id="KW-0524">Neurogenesis</keyword>
<keyword id="KW-0597">Phosphoprotein</keyword>
<keyword id="KW-1185">Reference proteome</keyword>
<keyword id="KW-0732">Signal</keyword>
<keyword id="KW-0812">Transmembrane</keyword>
<keyword id="KW-1133">Transmembrane helix</keyword>
<name>EFNB1_XENLA</name>
<accession>O13097</accession>
<organism>
    <name type="scientific">Xenopus laevis</name>
    <name type="common">African clawed frog</name>
    <dbReference type="NCBI Taxonomy" id="8355"/>
    <lineage>
        <taxon>Eukaryota</taxon>
        <taxon>Metazoa</taxon>
        <taxon>Chordata</taxon>
        <taxon>Craniata</taxon>
        <taxon>Vertebrata</taxon>
        <taxon>Euteleostomi</taxon>
        <taxon>Amphibia</taxon>
        <taxon>Batrachia</taxon>
        <taxon>Anura</taxon>
        <taxon>Pipoidea</taxon>
        <taxon>Pipidae</taxon>
        <taxon>Xenopodinae</taxon>
        <taxon>Xenopus</taxon>
        <taxon>Xenopus</taxon>
    </lineage>
</organism>
<gene>
    <name type="primary">efnb1</name>
    <name type="synonym">eplg2</name>
    <name type="synonym">lerk2</name>
</gene>
<feature type="signal peptide" evidence="2">
    <location>
        <begin position="1"/>
        <end position="20"/>
    </location>
</feature>
<feature type="chain" id="PRO_0000008391" description="Ephrin-B1">
    <location>
        <begin position="21"/>
        <end position="329"/>
    </location>
</feature>
<feature type="topological domain" description="Extracellular" evidence="2">
    <location>
        <begin position="21"/>
        <end position="226"/>
    </location>
</feature>
<feature type="transmembrane region" description="Helical" evidence="2">
    <location>
        <begin position="227"/>
        <end position="247"/>
    </location>
</feature>
<feature type="topological domain" description="Cytoplasmic" evidence="2">
    <location>
        <begin position="248"/>
        <end position="329"/>
    </location>
</feature>
<feature type="domain" description="Ephrin RBD" evidence="3">
    <location>
        <begin position="23"/>
        <end position="157"/>
    </location>
</feature>
<feature type="region of interest" description="Disordered" evidence="4">
    <location>
        <begin position="163"/>
        <end position="192"/>
    </location>
</feature>
<feature type="short sequence motif" description="PDZ-binding" evidence="2">
    <location>
        <begin position="327"/>
        <end position="329"/>
    </location>
</feature>
<feature type="glycosylation site" description="N-linked (GlcNAc...) asparagine" evidence="2">
    <location>
        <position position="132"/>
    </location>
</feature>
<feature type="glycosylation site" description="N-linked (GlcNAc...) asparagine" evidence="2">
    <location>
        <position position="203"/>
    </location>
</feature>
<feature type="disulfide bond" evidence="3">
    <location>
        <begin position="57"/>
        <end position="94"/>
    </location>
</feature>
<feature type="disulfide bond" evidence="3">
    <location>
        <begin position="82"/>
        <end position="146"/>
    </location>
</feature>
<sequence length="329" mass="36593">MEGLRRLLGLLLVLYRLCSALGKNLEPVTWNSQNPRFISGKGLVLYPEIGDRLDIICPKGDSSQPYEYYKLYMVRRDQLEACSTVIDPNVLVTCNQPGKEYRFTIKFQEFSPNYMGLEFRRNQDYYITSTSNSTLQGLENREGGVCQTRSMKIIMKVGQDPNAVPPEQLTTTRPSKEADNTGKIATFGPWNGPVENPGKSDTNLSDKPTAGGGVDGFFNSKIAVFAAIGAGCVIFILIIIFLVVLLIKIRKRHRKHTQQRAAALSLSTLASPKCSGNAGSEPSDIIIPLRTTENNYCPHYEKVSGDYGHPVYIVQEMPPQSPANIYYKV</sequence>
<proteinExistence type="evidence at protein level"/>
<reference key="1">
    <citation type="journal article" date="1997" name="Oncogene">
        <title>Identification of XLerk, an Eph family ligand regulated during mesoderm induction and neurogenesis in Xenopus laevis.</title>
        <authorList>
            <person name="Jones T.L."/>
            <person name="Karavanova I."/>
            <person name="Chong L."/>
            <person name="Zhou R.P."/>
            <person name="Daar I.O."/>
        </authorList>
    </citation>
    <scope>NUCLEOTIDE SEQUENCE [MRNA]</scope>
</reference>
<reference key="2">
    <citation type="submission" date="2008-06" db="EMBL/GenBank/DDBJ databases">
        <authorList>
            <person name="Daar I.O."/>
        </authorList>
    </citation>
    <scope>SEQUENCE REVISION TO 61-63; 195; 210-212 AND 260</scope>
</reference>
<reference key="3">
    <citation type="journal article" date="2011" name="BMB Rep.">
        <title>EphrinB1 interacts with the transcriptional co-repressor Groucho/xTLE4.</title>
        <authorList>
            <person name="Kamata T."/>
            <person name="Bong Y.S."/>
            <person name="Mood K."/>
            <person name="Park M.J."/>
            <person name="Nishanian T.G."/>
            <person name="Lee H.S."/>
        </authorList>
    </citation>
    <scope>INTERACTION WITH TLE4</scope>
    <scope>DEVELOPMENTAL STAGE</scope>
    <scope>PHOSPHORYLATION</scope>
</reference>
<comment type="function">
    <text evidence="1">Cell surface transmembrane ligand for Eph receptors, a family of receptor tyrosine kinases which are crucial for migration, repulsion and adhesion during neuronal, vascular and epithelial development. Binds promiscuously Eph receptors residing on adjacent cells, leading to contact-dependent bidirectional signaling into neighboring cells. The signaling pathway downstream of the receptor is referred to as forward signaling while the signaling pathway downstream of the ephrin ligand is referred to as reverse signaling (By similarity). May have a role in the developing mesenchymal and nervous tissue.</text>
</comment>
<comment type="subunit">
    <text evidence="5">Interacts with TLE4 through the PDZ-binding motif.</text>
</comment>
<comment type="interaction">
    <interactant intactId="EBI-15667006">
        <id>O13097</id>
    </interactant>
    <interactant intactId="EBI-15667028">
        <id>Q8AW92</id>
        <label>lmo4-a</label>
    </interactant>
    <organismsDiffer>false</organismsDiffer>
    <experiments>2</experiments>
</comment>
<comment type="interaction">
    <interactant intactId="EBI-15667006">
        <id>O13097</id>
    </interactant>
    <interactant intactId="EBI-10764775">
        <id>P52631</id>
        <label>Stat3</label>
    </interactant>
    <organismsDiffer>true</organismsDiffer>
    <experiments>4</experiments>
</comment>
<comment type="subcellular location">
    <subcellularLocation>
        <location>Membrane</location>
        <topology>Single-pass type I membrane protein</topology>
    </subcellularLocation>
</comment>
<comment type="tissue specificity">
    <text>Expressed at low levels in most tissues with highest levels in the kidney, oocytes, ovary and testis.</text>
</comment>
<comment type="developmental stage">
    <text evidence="5">At stages 16 and 32, expressed in the neural groove, rhombomeres, forebrain and branchial arches.</text>
</comment>
<comment type="domain">
    <text evidence="5">The PDZ-binding motif is required for TLE4-binding.</text>
</comment>
<comment type="PTM">
    <text evidence="5">Inducible phosphorylation of tyrosine residues in the cytoplasmic domain. Tyrosine phosphorylation inhibits TLE4-binding.</text>
</comment>
<comment type="similarity">
    <text evidence="3">Belongs to the ephrin family.</text>
</comment>
<evidence type="ECO:0000250" key="1"/>
<evidence type="ECO:0000255" key="2"/>
<evidence type="ECO:0000255" key="3">
    <source>
        <dbReference type="PROSITE-ProRule" id="PRU00884"/>
    </source>
</evidence>
<evidence type="ECO:0000256" key="4">
    <source>
        <dbReference type="SAM" id="MobiDB-lite"/>
    </source>
</evidence>
<evidence type="ECO:0000269" key="5">
    <source>
    </source>
</evidence>